<accession>Q8ZYX2</accession>
<proteinExistence type="inferred from homology"/>
<feature type="chain" id="PRO_0000154298" description="Indole-3-glycerol phosphate synthase">
    <location>
        <begin position="1"/>
        <end position="249"/>
    </location>
</feature>
<name>TRPC_PYRAE</name>
<protein>
    <recommendedName>
        <fullName evidence="1">Indole-3-glycerol phosphate synthase</fullName>
        <shortName evidence="1">IGPS</shortName>
        <ecNumber evidence="1">4.1.1.48</ecNumber>
    </recommendedName>
</protein>
<evidence type="ECO:0000255" key="1">
    <source>
        <dbReference type="HAMAP-Rule" id="MF_00134"/>
    </source>
</evidence>
<comment type="catalytic activity">
    <reaction evidence="1">
        <text>1-(2-carboxyphenylamino)-1-deoxy-D-ribulose 5-phosphate + H(+) = (1S,2R)-1-C-(indol-3-yl)glycerol 3-phosphate + CO2 + H2O</text>
        <dbReference type="Rhea" id="RHEA:23476"/>
        <dbReference type="ChEBI" id="CHEBI:15377"/>
        <dbReference type="ChEBI" id="CHEBI:15378"/>
        <dbReference type="ChEBI" id="CHEBI:16526"/>
        <dbReference type="ChEBI" id="CHEBI:58613"/>
        <dbReference type="ChEBI" id="CHEBI:58866"/>
        <dbReference type="EC" id="4.1.1.48"/>
    </reaction>
</comment>
<comment type="pathway">
    <text evidence="1">Amino-acid biosynthesis; L-tryptophan biosynthesis; L-tryptophan from chorismate: step 4/5.</text>
</comment>
<comment type="similarity">
    <text evidence="1">Belongs to the TrpC family.</text>
</comment>
<sequence length="249" mass="28213">MDFLTEVKRTVELRLATEPPPPARSLPLVDFIKSLGEFGIIAEYKRASPRGVIRLDLPPWAYFAQVYQYASAFSVLTEPFWFLGDYRFIPIAKAFKPVLMKDFVIDKRQIEAAYGYGADAVLIIYRLVERERAMELAEYAQRLGLTPVVEIDNVQDAKEVATWGGRLVIGINSRDLKTLETNVQRAFEVAKALRGDVEFIIESGLSRPEEVERACSLYARGVLIGTALMKNPVLVKELRQVAERCIARR</sequence>
<dbReference type="EC" id="4.1.1.48" evidence="1"/>
<dbReference type="EMBL" id="AE009441">
    <property type="protein sequence ID" value="AAL62870.1"/>
    <property type="molecule type" value="Genomic_DNA"/>
</dbReference>
<dbReference type="RefSeq" id="WP_011007342.1">
    <property type="nucleotide sequence ID" value="NC_003364.1"/>
</dbReference>
<dbReference type="SMR" id="Q8ZYX2"/>
<dbReference type="FunCoup" id="Q8ZYX2">
    <property type="interactions" value="103"/>
</dbReference>
<dbReference type="STRING" id="178306.PAE0570"/>
<dbReference type="EnsemblBacteria" id="AAL62870">
    <property type="protein sequence ID" value="AAL62870"/>
    <property type="gene ID" value="PAE0570"/>
</dbReference>
<dbReference type="GeneID" id="1465093"/>
<dbReference type="KEGG" id="pai:PAE0570"/>
<dbReference type="PATRIC" id="fig|178306.9.peg.412"/>
<dbReference type="eggNOG" id="arCOG01088">
    <property type="taxonomic scope" value="Archaea"/>
</dbReference>
<dbReference type="HOGENOM" id="CLU_034247_0_1_2"/>
<dbReference type="InParanoid" id="Q8ZYX2"/>
<dbReference type="UniPathway" id="UPA00035">
    <property type="reaction ID" value="UER00043"/>
</dbReference>
<dbReference type="Proteomes" id="UP000002439">
    <property type="component" value="Chromosome"/>
</dbReference>
<dbReference type="GO" id="GO:0004425">
    <property type="term" value="F:indole-3-glycerol-phosphate synthase activity"/>
    <property type="evidence" value="ECO:0000318"/>
    <property type="project" value="GO_Central"/>
</dbReference>
<dbReference type="GO" id="GO:0004640">
    <property type="term" value="F:phosphoribosylanthranilate isomerase activity"/>
    <property type="evidence" value="ECO:0000318"/>
    <property type="project" value="GO_Central"/>
</dbReference>
<dbReference type="GO" id="GO:0000162">
    <property type="term" value="P:L-tryptophan biosynthetic process"/>
    <property type="evidence" value="ECO:0000318"/>
    <property type="project" value="GO_Central"/>
</dbReference>
<dbReference type="CDD" id="cd00331">
    <property type="entry name" value="IGPS"/>
    <property type="match status" value="1"/>
</dbReference>
<dbReference type="FunFam" id="3.20.20.70:FF:000500">
    <property type="entry name" value="Component II, glutamine amidotransferase"/>
    <property type="match status" value="1"/>
</dbReference>
<dbReference type="Gene3D" id="3.20.20.70">
    <property type="entry name" value="Aldolase class I"/>
    <property type="match status" value="1"/>
</dbReference>
<dbReference type="HAMAP" id="MF_00134_A">
    <property type="entry name" value="IGPS_A"/>
    <property type="match status" value="1"/>
</dbReference>
<dbReference type="InterPro" id="IPR013785">
    <property type="entry name" value="Aldolase_TIM"/>
</dbReference>
<dbReference type="InterPro" id="IPR045186">
    <property type="entry name" value="Indole-3-glycerol_P_synth"/>
</dbReference>
<dbReference type="InterPro" id="IPR013798">
    <property type="entry name" value="Indole-3-glycerol_P_synth_dom"/>
</dbReference>
<dbReference type="InterPro" id="IPR001468">
    <property type="entry name" value="Indole-3-GlycerolPSynthase_CS"/>
</dbReference>
<dbReference type="InterPro" id="IPR011060">
    <property type="entry name" value="RibuloseP-bd_barrel"/>
</dbReference>
<dbReference type="PANTHER" id="PTHR22854:SF2">
    <property type="entry name" value="INDOLE-3-GLYCEROL-PHOSPHATE SYNTHASE"/>
    <property type="match status" value="1"/>
</dbReference>
<dbReference type="PANTHER" id="PTHR22854">
    <property type="entry name" value="TRYPTOPHAN BIOSYNTHESIS PROTEIN"/>
    <property type="match status" value="1"/>
</dbReference>
<dbReference type="Pfam" id="PF00218">
    <property type="entry name" value="IGPS"/>
    <property type="match status" value="1"/>
</dbReference>
<dbReference type="SUPFAM" id="SSF51366">
    <property type="entry name" value="Ribulose-phoshate binding barrel"/>
    <property type="match status" value="1"/>
</dbReference>
<dbReference type="PROSITE" id="PS00614">
    <property type="entry name" value="IGPS"/>
    <property type="match status" value="1"/>
</dbReference>
<reference key="1">
    <citation type="journal article" date="2002" name="Proc. Natl. Acad. Sci. U.S.A.">
        <title>Genome sequence of the hyperthermophilic crenarchaeon Pyrobaculum aerophilum.</title>
        <authorList>
            <person name="Fitz-Gibbon S.T."/>
            <person name="Ladner H."/>
            <person name="Kim U.-J."/>
            <person name="Stetter K.O."/>
            <person name="Simon M.I."/>
            <person name="Miller J.H."/>
        </authorList>
    </citation>
    <scope>NUCLEOTIDE SEQUENCE [LARGE SCALE GENOMIC DNA]</scope>
    <source>
        <strain>ATCC 51768 / DSM 7523 / JCM 9630 / CIP 104966 / NBRC 100827 / IM2</strain>
    </source>
</reference>
<organism>
    <name type="scientific">Pyrobaculum aerophilum (strain ATCC 51768 / DSM 7523 / JCM 9630 / CIP 104966 / NBRC 100827 / IM2)</name>
    <dbReference type="NCBI Taxonomy" id="178306"/>
    <lineage>
        <taxon>Archaea</taxon>
        <taxon>Thermoproteota</taxon>
        <taxon>Thermoprotei</taxon>
        <taxon>Thermoproteales</taxon>
        <taxon>Thermoproteaceae</taxon>
        <taxon>Pyrobaculum</taxon>
    </lineage>
</organism>
<gene>
    <name evidence="1" type="primary">trpC</name>
    <name type="ordered locus">PAE0570</name>
</gene>
<keyword id="KW-0028">Amino-acid biosynthesis</keyword>
<keyword id="KW-0057">Aromatic amino acid biosynthesis</keyword>
<keyword id="KW-0210">Decarboxylase</keyword>
<keyword id="KW-0456">Lyase</keyword>
<keyword id="KW-1185">Reference proteome</keyword>
<keyword id="KW-0822">Tryptophan biosynthesis</keyword>